<evidence type="ECO:0000250" key="1"/>
<evidence type="ECO:0000250" key="2">
    <source>
        <dbReference type="UniProtKB" id="P00157"/>
    </source>
</evidence>
<evidence type="ECO:0000255" key="3">
    <source>
        <dbReference type="PROSITE-ProRule" id="PRU00968"/>
    </source>
</evidence>
<feature type="chain" id="PRO_0000060999" description="Cytochrome b">
    <location>
        <begin position="1" status="less than"/>
        <end position="96" status="greater than"/>
    </location>
</feature>
<feature type="transmembrane region" description="Helical" evidence="2">
    <location>
        <begin position="1" status="less than"/>
        <end position="15"/>
    </location>
</feature>
<feature type="transmembrane region" description="Helical" evidence="2">
    <location>
        <begin position="39"/>
        <end position="60"/>
    </location>
</feature>
<feature type="transmembrane region" description="Helical" evidence="2">
    <location>
        <begin position="75"/>
        <end position="95"/>
    </location>
</feature>
<feature type="binding site" description="axial binding residue" evidence="2">
    <location>
        <position position="45"/>
    </location>
    <ligand>
        <name>heme b</name>
        <dbReference type="ChEBI" id="CHEBI:60344"/>
        <label>b562</label>
    </ligand>
    <ligandPart>
        <name>Fe</name>
        <dbReference type="ChEBI" id="CHEBI:18248"/>
    </ligandPart>
</feature>
<feature type="binding site" description="axial binding residue" evidence="2">
    <location>
        <position position="59"/>
    </location>
    <ligand>
        <name>heme b</name>
        <dbReference type="ChEBI" id="CHEBI:60344"/>
        <label>b566</label>
    </ligand>
    <ligandPart>
        <name>Fe</name>
        <dbReference type="ChEBI" id="CHEBI:18248"/>
    </ligandPart>
</feature>
<feature type="non-terminal residue">
    <location>
        <position position="1"/>
    </location>
</feature>
<feature type="non-terminal residue">
    <location>
        <position position="96"/>
    </location>
</feature>
<reference key="1">
    <citation type="journal article" date="1991" name="Mol. Biol. Evol.">
        <title>Phylogenetic relationships of neopterygian fishes, inferred from mitochondrial DNA sequences.</title>
        <authorList>
            <person name="Normark B.B."/>
            <person name="McCune A.R."/>
            <person name="Harrison R.G."/>
        </authorList>
    </citation>
    <scope>NUCLEOTIDE SEQUENCE [GENOMIC DNA]</scope>
</reference>
<organism>
    <name type="scientific">Geophagus steindachneri</name>
    <name type="common">Red hump earth eater</name>
    <dbReference type="NCBI Taxonomy" id="13074"/>
    <lineage>
        <taxon>Eukaryota</taxon>
        <taxon>Metazoa</taxon>
        <taxon>Chordata</taxon>
        <taxon>Craniata</taxon>
        <taxon>Vertebrata</taxon>
        <taxon>Euteleostomi</taxon>
        <taxon>Actinopterygii</taxon>
        <taxon>Neopterygii</taxon>
        <taxon>Teleostei</taxon>
        <taxon>Neoteleostei</taxon>
        <taxon>Acanthomorphata</taxon>
        <taxon>Ovalentaria</taxon>
        <taxon>Cichlomorphae</taxon>
        <taxon>Cichliformes</taxon>
        <taxon>Cichlidae</taxon>
        <taxon>New World cichlids</taxon>
        <taxon>Geophaginae</taxon>
        <taxon>Geophagini</taxon>
        <taxon>Geophagus</taxon>
    </lineage>
</organism>
<proteinExistence type="inferred from homology"/>
<comment type="function">
    <text evidence="2">Component of the ubiquinol-cytochrome c reductase complex (complex III or cytochrome b-c1 complex) that is part of the mitochondrial respiratory chain. The b-c1 complex mediates electron transfer from ubiquinol to cytochrome c. Contributes to the generation of a proton gradient across the mitochondrial membrane that is then used for ATP synthesis.</text>
</comment>
<comment type="cofactor">
    <cofactor evidence="2">
        <name>heme b</name>
        <dbReference type="ChEBI" id="CHEBI:60344"/>
    </cofactor>
    <text evidence="2">Binds 2 heme b groups non-covalently.</text>
</comment>
<comment type="subunit">
    <text evidence="2">The cytochrome bc1 complex contains 3 respiratory subunits (MT-CYB, CYC1 and UQCRFS1), 2 core proteins (UQCRC1 and UQCRC2) and probably 6 low-molecular weight proteins.</text>
</comment>
<comment type="subcellular location">
    <subcellularLocation>
        <location evidence="2">Mitochondrion inner membrane</location>
        <topology evidence="2">Multi-pass membrane protein</topology>
    </subcellularLocation>
</comment>
<comment type="miscellaneous">
    <text evidence="1">Heme 1 (or BL or b562) is low-potential and absorbs at about 562 nm, and heme 2 (or BH or b566) is high-potential and absorbs at about 566 nm.</text>
</comment>
<comment type="similarity">
    <text evidence="3">Belongs to the cytochrome b family.</text>
</comment>
<comment type="caution">
    <text evidence="2">The full-length protein contains only eight transmembrane helices, not nine as predicted by bioinformatics tools.</text>
</comment>
<keyword id="KW-0249">Electron transport</keyword>
<keyword id="KW-0349">Heme</keyword>
<keyword id="KW-0408">Iron</keyword>
<keyword id="KW-0472">Membrane</keyword>
<keyword id="KW-0479">Metal-binding</keyword>
<keyword id="KW-0496">Mitochondrion</keyword>
<keyword id="KW-0999">Mitochondrion inner membrane</keyword>
<keyword id="KW-0679">Respiratory chain</keyword>
<keyword id="KW-0812">Transmembrane</keyword>
<keyword id="KW-1133">Transmembrane helix</keyword>
<keyword id="KW-0813">Transport</keyword>
<keyword id="KW-0830">Ubiquinone</keyword>
<sequence length="96" mass="10916">LCXIXQILTGLFLAMHYTSDIATAFSSVAHICRDVNYGWLIRNMHANGSSFFFICIYLHIGRGLYYGSYLYKETWNVGVILLLLVMMTAFVGYVLP</sequence>
<accession>P29665</accession>
<protein>
    <recommendedName>
        <fullName>Cytochrome b</fullName>
    </recommendedName>
    <alternativeName>
        <fullName>Complex III subunit 3</fullName>
    </alternativeName>
    <alternativeName>
        <fullName>Complex III subunit III</fullName>
    </alternativeName>
    <alternativeName>
        <fullName>Cytochrome b-c1 complex subunit 3</fullName>
    </alternativeName>
    <alternativeName>
        <fullName>Ubiquinol-cytochrome-c reductase complex cytochrome b subunit</fullName>
    </alternativeName>
</protein>
<geneLocation type="mitochondrion"/>
<name>CYB_GEOSD</name>
<dbReference type="EMBL" id="M64893">
    <property type="protein sequence ID" value="AAB01459.1"/>
    <property type="molecule type" value="Genomic_DNA"/>
</dbReference>
<dbReference type="GO" id="GO:0005743">
    <property type="term" value="C:mitochondrial inner membrane"/>
    <property type="evidence" value="ECO:0007669"/>
    <property type="project" value="UniProtKB-SubCell"/>
</dbReference>
<dbReference type="GO" id="GO:0046872">
    <property type="term" value="F:metal ion binding"/>
    <property type="evidence" value="ECO:0007669"/>
    <property type="project" value="UniProtKB-KW"/>
</dbReference>
<dbReference type="GO" id="GO:0008121">
    <property type="term" value="F:ubiquinol-cytochrome-c reductase activity"/>
    <property type="evidence" value="ECO:0007669"/>
    <property type="project" value="TreeGrafter"/>
</dbReference>
<dbReference type="GO" id="GO:0006122">
    <property type="term" value="P:mitochondrial electron transport, ubiquinol to cytochrome c"/>
    <property type="evidence" value="ECO:0007669"/>
    <property type="project" value="TreeGrafter"/>
</dbReference>
<dbReference type="Gene3D" id="1.20.810.10">
    <property type="entry name" value="Cytochrome Bc1 Complex, Chain C"/>
    <property type="match status" value="1"/>
</dbReference>
<dbReference type="InterPro" id="IPR005797">
    <property type="entry name" value="Cyt_b/b6_N"/>
</dbReference>
<dbReference type="InterPro" id="IPR027387">
    <property type="entry name" value="Cytb/b6-like_sf"/>
</dbReference>
<dbReference type="InterPro" id="IPR016174">
    <property type="entry name" value="Di-haem_cyt_TM"/>
</dbReference>
<dbReference type="PANTHER" id="PTHR19271">
    <property type="entry name" value="CYTOCHROME B"/>
    <property type="match status" value="1"/>
</dbReference>
<dbReference type="PANTHER" id="PTHR19271:SF16">
    <property type="entry name" value="CYTOCHROME B"/>
    <property type="match status" value="1"/>
</dbReference>
<dbReference type="Pfam" id="PF00033">
    <property type="entry name" value="Cytochrome_B"/>
    <property type="match status" value="1"/>
</dbReference>
<dbReference type="SUPFAM" id="SSF81342">
    <property type="entry name" value="Transmembrane di-heme cytochromes"/>
    <property type="match status" value="1"/>
</dbReference>
<dbReference type="PROSITE" id="PS51002">
    <property type="entry name" value="CYTB_NTER"/>
    <property type="match status" value="1"/>
</dbReference>
<gene>
    <name type="primary">mt-cyb</name>
    <name type="synonym">cob</name>
    <name type="synonym">cytb</name>
    <name type="synonym">mtcyb</name>
</gene>